<sequence length="147" mass="16479">MKVILKEDVHGLGRAGQTINVKDGYARNYLLPRGLALIADEKNLKVLEYQKKKFEEQAKKKRQDAESIAERLSALELTIKAKAGEDQKLFGSITAKDIAELLQKEGFLVDKKQINISEPIKRVGEHEVEVKLLSNLSAKLKINVVAE</sequence>
<protein>
    <recommendedName>
        <fullName evidence="1">Large ribosomal subunit protein bL9</fullName>
    </recommendedName>
    <alternativeName>
        <fullName evidence="2">50S ribosomal protein L9</fullName>
    </alternativeName>
</protein>
<evidence type="ECO:0000255" key="1">
    <source>
        <dbReference type="HAMAP-Rule" id="MF_00503"/>
    </source>
</evidence>
<evidence type="ECO:0000305" key="2"/>
<organism>
    <name type="scientific">Thermodesulfovibrio yellowstonii (strain ATCC 51303 / DSM 11347 / YP87)</name>
    <dbReference type="NCBI Taxonomy" id="289376"/>
    <lineage>
        <taxon>Bacteria</taxon>
        <taxon>Pseudomonadati</taxon>
        <taxon>Nitrospirota</taxon>
        <taxon>Thermodesulfovibrionia</taxon>
        <taxon>Thermodesulfovibrionales</taxon>
        <taxon>Thermodesulfovibrionaceae</taxon>
        <taxon>Thermodesulfovibrio</taxon>
    </lineage>
</organism>
<feature type="chain" id="PRO_1000126988" description="Large ribosomal subunit protein bL9">
    <location>
        <begin position="1"/>
        <end position="147"/>
    </location>
</feature>
<comment type="function">
    <text evidence="1">Binds to the 23S rRNA.</text>
</comment>
<comment type="similarity">
    <text evidence="1">Belongs to the bacterial ribosomal protein bL9 family.</text>
</comment>
<keyword id="KW-1185">Reference proteome</keyword>
<keyword id="KW-0687">Ribonucleoprotein</keyword>
<keyword id="KW-0689">Ribosomal protein</keyword>
<keyword id="KW-0694">RNA-binding</keyword>
<keyword id="KW-0699">rRNA-binding</keyword>
<reference key="1">
    <citation type="submission" date="2008-08" db="EMBL/GenBank/DDBJ databases">
        <title>The complete genome sequence of Thermodesulfovibrio yellowstonii strain ATCC 51303 / DSM 11347 / YP87.</title>
        <authorList>
            <person name="Dodson R.J."/>
            <person name="Durkin A.S."/>
            <person name="Wu M."/>
            <person name="Eisen J."/>
            <person name="Sutton G."/>
        </authorList>
    </citation>
    <scope>NUCLEOTIDE SEQUENCE [LARGE SCALE GENOMIC DNA]</scope>
    <source>
        <strain>ATCC 51303 / DSM 11347 / YP87</strain>
    </source>
</reference>
<accession>B5YIM4</accession>
<dbReference type="EMBL" id="CP001147">
    <property type="protein sequence ID" value="ACI20510.1"/>
    <property type="molecule type" value="Genomic_DNA"/>
</dbReference>
<dbReference type="RefSeq" id="WP_012545246.1">
    <property type="nucleotide sequence ID" value="NC_011296.1"/>
</dbReference>
<dbReference type="RefSeq" id="YP_002248183.1">
    <property type="nucleotide sequence ID" value="NC_011296.1"/>
</dbReference>
<dbReference type="SMR" id="B5YIM4"/>
<dbReference type="FunCoup" id="B5YIM4">
    <property type="interactions" value="566"/>
</dbReference>
<dbReference type="STRING" id="289376.THEYE_A0336"/>
<dbReference type="EnsemblBacteria" id="ACI20510">
    <property type="protein sequence ID" value="ACI20510"/>
    <property type="gene ID" value="THEYE_A0336"/>
</dbReference>
<dbReference type="KEGG" id="tye:THEYE_A0336"/>
<dbReference type="PATRIC" id="fig|289376.4.peg.329"/>
<dbReference type="eggNOG" id="COG0359">
    <property type="taxonomic scope" value="Bacteria"/>
</dbReference>
<dbReference type="HOGENOM" id="CLU_078938_3_0_0"/>
<dbReference type="InParanoid" id="B5YIM4"/>
<dbReference type="OrthoDB" id="9788336at2"/>
<dbReference type="Proteomes" id="UP000000718">
    <property type="component" value="Chromosome"/>
</dbReference>
<dbReference type="GO" id="GO:0022625">
    <property type="term" value="C:cytosolic large ribosomal subunit"/>
    <property type="evidence" value="ECO:0000318"/>
    <property type="project" value="GO_Central"/>
</dbReference>
<dbReference type="GO" id="GO:0019843">
    <property type="term" value="F:rRNA binding"/>
    <property type="evidence" value="ECO:0007669"/>
    <property type="project" value="UniProtKB-UniRule"/>
</dbReference>
<dbReference type="GO" id="GO:0003735">
    <property type="term" value="F:structural constituent of ribosome"/>
    <property type="evidence" value="ECO:0007669"/>
    <property type="project" value="InterPro"/>
</dbReference>
<dbReference type="GO" id="GO:0006412">
    <property type="term" value="P:translation"/>
    <property type="evidence" value="ECO:0007669"/>
    <property type="project" value="UniProtKB-UniRule"/>
</dbReference>
<dbReference type="FunFam" id="3.40.5.10:FF:000002">
    <property type="entry name" value="50S ribosomal protein L9"/>
    <property type="match status" value="1"/>
</dbReference>
<dbReference type="Gene3D" id="3.10.430.100">
    <property type="entry name" value="Ribosomal protein L9, C-terminal domain"/>
    <property type="match status" value="1"/>
</dbReference>
<dbReference type="Gene3D" id="3.40.5.10">
    <property type="entry name" value="Ribosomal protein L9, N-terminal domain"/>
    <property type="match status" value="1"/>
</dbReference>
<dbReference type="HAMAP" id="MF_00503">
    <property type="entry name" value="Ribosomal_bL9"/>
    <property type="match status" value="1"/>
</dbReference>
<dbReference type="InterPro" id="IPR000244">
    <property type="entry name" value="Ribosomal_bL9"/>
</dbReference>
<dbReference type="InterPro" id="IPR009027">
    <property type="entry name" value="Ribosomal_bL9/RNase_H1_N"/>
</dbReference>
<dbReference type="InterPro" id="IPR020594">
    <property type="entry name" value="Ribosomal_bL9_bac/chp"/>
</dbReference>
<dbReference type="InterPro" id="IPR020069">
    <property type="entry name" value="Ribosomal_bL9_C"/>
</dbReference>
<dbReference type="InterPro" id="IPR036791">
    <property type="entry name" value="Ribosomal_bL9_C_sf"/>
</dbReference>
<dbReference type="InterPro" id="IPR020070">
    <property type="entry name" value="Ribosomal_bL9_N"/>
</dbReference>
<dbReference type="InterPro" id="IPR036935">
    <property type="entry name" value="Ribosomal_bL9_N_sf"/>
</dbReference>
<dbReference type="NCBIfam" id="TIGR00158">
    <property type="entry name" value="L9"/>
    <property type="match status" value="1"/>
</dbReference>
<dbReference type="PANTHER" id="PTHR21368">
    <property type="entry name" value="50S RIBOSOMAL PROTEIN L9"/>
    <property type="match status" value="1"/>
</dbReference>
<dbReference type="Pfam" id="PF03948">
    <property type="entry name" value="Ribosomal_L9_C"/>
    <property type="match status" value="1"/>
</dbReference>
<dbReference type="Pfam" id="PF01281">
    <property type="entry name" value="Ribosomal_L9_N"/>
    <property type="match status" value="1"/>
</dbReference>
<dbReference type="SUPFAM" id="SSF55658">
    <property type="entry name" value="L9 N-domain-like"/>
    <property type="match status" value="1"/>
</dbReference>
<dbReference type="SUPFAM" id="SSF55653">
    <property type="entry name" value="Ribosomal protein L9 C-domain"/>
    <property type="match status" value="1"/>
</dbReference>
<name>RL9_THEYD</name>
<proteinExistence type="inferred from homology"/>
<gene>
    <name evidence="1" type="primary">rplI</name>
    <name type="ordered locus">THEYE_A0336</name>
</gene>